<proteinExistence type="inferred from homology"/>
<comment type="function">
    <text evidence="1">Produces ATP from ADP in the presence of a proton gradient across the membrane. The gamma chain is believed to be important in regulating ATPase activity and the flow of protons through the CF(0) complex.</text>
</comment>
<comment type="subunit">
    <text evidence="1">F-type ATPases have 2 components, CF(1) - the catalytic core - and CF(0) - the membrane proton channel. CF(1) has five subunits: alpha(3), beta(3), gamma(1), delta(1), epsilon(1). CF(0) has three main subunits: a, b and c.</text>
</comment>
<comment type="subcellular location">
    <subcellularLocation>
        <location evidence="1">Cell inner membrane</location>
        <topology evidence="1">Peripheral membrane protein</topology>
    </subcellularLocation>
</comment>
<comment type="similarity">
    <text evidence="1">Belongs to the ATPase gamma chain family.</text>
</comment>
<evidence type="ECO:0000255" key="1">
    <source>
        <dbReference type="HAMAP-Rule" id="MF_00815"/>
    </source>
</evidence>
<feature type="chain" id="PRO_1000053220" description="ATP synthase gamma chain">
    <location>
        <begin position="1"/>
        <end position="286"/>
    </location>
</feature>
<protein>
    <recommendedName>
        <fullName evidence="1">ATP synthase gamma chain</fullName>
    </recommendedName>
    <alternativeName>
        <fullName evidence="1">ATP synthase F1 sector gamma subunit</fullName>
    </alternativeName>
    <alternativeName>
        <fullName evidence="1">F-ATPase gamma subunit</fullName>
    </alternativeName>
</protein>
<name>ATPG_CHRFK</name>
<reference key="1">
    <citation type="journal article" date="2006" name="Environ. Microbiol.">
        <title>Whole genome analysis of the marine Bacteroidetes'Gramella forsetii' reveals adaptations to degradation of polymeric organic matter.</title>
        <authorList>
            <person name="Bauer M."/>
            <person name="Kube M."/>
            <person name="Teeling H."/>
            <person name="Richter M."/>
            <person name="Lombardot T."/>
            <person name="Allers E."/>
            <person name="Wuerdemann C.A."/>
            <person name="Quast C."/>
            <person name="Kuhl H."/>
            <person name="Knaust F."/>
            <person name="Woebken D."/>
            <person name="Bischof K."/>
            <person name="Mussmann M."/>
            <person name="Choudhuri J.V."/>
            <person name="Meyer F."/>
            <person name="Reinhardt R."/>
            <person name="Amann R.I."/>
            <person name="Gloeckner F.O."/>
        </authorList>
    </citation>
    <scope>NUCLEOTIDE SEQUENCE [LARGE SCALE GENOMIC DNA]</scope>
    <source>
        <strain>DSM 17595 / CGMCC 1.15422 / KT0803</strain>
    </source>
</reference>
<dbReference type="EMBL" id="CU207366">
    <property type="protein sequence ID" value="CAL68208.1"/>
    <property type="molecule type" value="Genomic_DNA"/>
</dbReference>
<dbReference type="RefSeq" id="WP_011711109.1">
    <property type="nucleotide sequence ID" value="NC_008571.1"/>
</dbReference>
<dbReference type="SMR" id="A0M6G3"/>
<dbReference type="STRING" id="411154.GFO_3265"/>
<dbReference type="KEGG" id="gfo:GFO_3265"/>
<dbReference type="eggNOG" id="COG0224">
    <property type="taxonomic scope" value="Bacteria"/>
</dbReference>
<dbReference type="HOGENOM" id="CLU_050669_0_1_10"/>
<dbReference type="OrthoDB" id="9812769at2"/>
<dbReference type="Proteomes" id="UP000000755">
    <property type="component" value="Chromosome"/>
</dbReference>
<dbReference type="GO" id="GO:0005886">
    <property type="term" value="C:plasma membrane"/>
    <property type="evidence" value="ECO:0007669"/>
    <property type="project" value="UniProtKB-SubCell"/>
</dbReference>
<dbReference type="GO" id="GO:0045259">
    <property type="term" value="C:proton-transporting ATP synthase complex"/>
    <property type="evidence" value="ECO:0007669"/>
    <property type="project" value="UniProtKB-KW"/>
</dbReference>
<dbReference type="GO" id="GO:0005524">
    <property type="term" value="F:ATP binding"/>
    <property type="evidence" value="ECO:0007669"/>
    <property type="project" value="UniProtKB-UniRule"/>
</dbReference>
<dbReference type="GO" id="GO:0046933">
    <property type="term" value="F:proton-transporting ATP synthase activity, rotational mechanism"/>
    <property type="evidence" value="ECO:0007669"/>
    <property type="project" value="UniProtKB-UniRule"/>
</dbReference>
<dbReference type="GO" id="GO:0042777">
    <property type="term" value="P:proton motive force-driven plasma membrane ATP synthesis"/>
    <property type="evidence" value="ECO:0007669"/>
    <property type="project" value="UniProtKB-UniRule"/>
</dbReference>
<dbReference type="CDD" id="cd12151">
    <property type="entry name" value="F1-ATPase_gamma"/>
    <property type="match status" value="1"/>
</dbReference>
<dbReference type="Gene3D" id="3.40.1380.10">
    <property type="match status" value="1"/>
</dbReference>
<dbReference type="Gene3D" id="1.10.287.80">
    <property type="entry name" value="ATP synthase, gamma subunit, helix hairpin domain"/>
    <property type="match status" value="1"/>
</dbReference>
<dbReference type="HAMAP" id="MF_00815">
    <property type="entry name" value="ATP_synth_gamma_bact"/>
    <property type="match status" value="1"/>
</dbReference>
<dbReference type="InterPro" id="IPR035968">
    <property type="entry name" value="ATP_synth_F1_ATPase_gsu"/>
</dbReference>
<dbReference type="InterPro" id="IPR000131">
    <property type="entry name" value="ATP_synth_F1_gsu"/>
</dbReference>
<dbReference type="InterPro" id="IPR023632">
    <property type="entry name" value="ATP_synth_F1_gsu_CS"/>
</dbReference>
<dbReference type="NCBIfam" id="TIGR01146">
    <property type="entry name" value="ATPsyn_F1gamma"/>
    <property type="match status" value="1"/>
</dbReference>
<dbReference type="PANTHER" id="PTHR11693">
    <property type="entry name" value="ATP SYNTHASE GAMMA CHAIN"/>
    <property type="match status" value="1"/>
</dbReference>
<dbReference type="PANTHER" id="PTHR11693:SF22">
    <property type="entry name" value="ATP SYNTHASE SUBUNIT GAMMA, MITOCHONDRIAL"/>
    <property type="match status" value="1"/>
</dbReference>
<dbReference type="Pfam" id="PF00231">
    <property type="entry name" value="ATP-synt"/>
    <property type="match status" value="1"/>
</dbReference>
<dbReference type="PRINTS" id="PR00126">
    <property type="entry name" value="ATPASEGAMMA"/>
</dbReference>
<dbReference type="SUPFAM" id="SSF52943">
    <property type="entry name" value="ATP synthase (F1-ATPase), gamma subunit"/>
    <property type="match status" value="1"/>
</dbReference>
<dbReference type="PROSITE" id="PS00153">
    <property type="entry name" value="ATPASE_GAMMA"/>
    <property type="match status" value="1"/>
</dbReference>
<gene>
    <name evidence="1" type="primary">atpG</name>
    <name type="ordered locus">GFO_3265</name>
</gene>
<accession>A0M6G3</accession>
<organism>
    <name type="scientific">Christiangramia forsetii (strain DSM 17595 / CGMCC 1.15422 / KT0803)</name>
    <name type="common">Gramella forsetii</name>
    <dbReference type="NCBI Taxonomy" id="411154"/>
    <lineage>
        <taxon>Bacteria</taxon>
        <taxon>Pseudomonadati</taxon>
        <taxon>Bacteroidota</taxon>
        <taxon>Flavobacteriia</taxon>
        <taxon>Flavobacteriales</taxon>
        <taxon>Flavobacteriaceae</taxon>
        <taxon>Christiangramia</taxon>
    </lineage>
</organism>
<keyword id="KW-0066">ATP synthesis</keyword>
<keyword id="KW-0997">Cell inner membrane</keyword>
<keyword id="KW-1003">Cell membrane</keyword>
<keyword id="KW-0139">CF(1)</keyword>
<keyword id="KW-0375">Hydrogen ion transport</keyword>
<keyword id="KW-0406">Ion transport</keyword>
<keyword id="KW-0472">Membrane</keyword>
<keyword id="KW-0813">Transport</keyword>
<sequence length="286" mass="32304">MANLKELRSRITSVSSTMQITKAMKMVSASKLSKAQDAITQMRPYSEKLTQLLQDLSATLDDDAGSKYAEEREVKNVLIVAISSNKGLAGAFNTNIIKAVKYKAKNDYKAKNIDIYTVGKKANDILKKEYDIHKNNNEIYDDLSFENASAIAEELMQLFLDEKYDKIVLVYNQFKNAATQIVQHEQFLPIEQFDSEENKQLDYIFEPSKLEIVKDLIPKSLKMQLFKALRDSFASEHGARMTAMHKATENATELRDDLKLSYNKARQASITNEILEIVGGAEALNG</sequence>